<name>RF1_ESCF3</name>
<protein>
    <recommendedName>
        <fullName evidence="1">Peptide chain release factor 1</fullName>
        <shortName evidence="1">RF-1</shortName>
    </recommendedName>
</protein>
<accession>B7LSH9</accession>
<gene>
    <name evidence="1" type="primary">prfA</name>
    <name type="ordered locus">EFER_1750</name>
</gene>
<keyword id="KW-0963">Cytoplasm</keyword>
<keyword id="KW-0488">Methylation</keyword>
<keyword id="KW-0648">Protein biosynthesis</keyword>
<comment type="function">
    <text evidence="1">Peptide chain release factor 1 directs the termination of translation in response to the peptide chain termination codons UAG and UAA.</text>
</comment>
<comment type="subcellular location">
    <subcellularLocation>
        <location evidence="1">Cytoplasm</location>
    </subcellularLocation>
</comment>
<comment type="PTM">
    <text evidence="1">Methylated by PrmC. Methylation increases the termination efficiency of RF1.</text>
</comment>
<comment type="similarity">
    <text evidence="1">Belongs to the prokaryotic/mitochondrial release factor family.</text>
</comment>
<evidence type="ECO:0000255" key="1">
    <source>
        <dbReference type="HAMAP-Rule" id="MF_00093"/>
    </source>
</evidence>
<evidence type="ECO:0000256" key="2">
    <source>
        <dbReference type="SAM" id="MobiDB-lite"/>
    </source>
</evidence>
<reference key="1">
    <citation type="journal article" date="2009" name="PLoS Genet.">
        <title>Organised genome dynamics in the Escherichia coli species results in highly diverse adaptive paths.</title>
        <authorList>
            <person name="Touchon M."/>
            <person name="Hoede C."/>
            <person name="Tenaillon O."/>
            <person name="Barbe V."/>
            <person name="Baeriswyl S."/>
            <person name="Bidet P."/>
            <person name="Bingen E."/>
            <person name="Bonacorsi S."/>
            <person name="Bouchier C."/>
            <person name="Bouvet O."/>
            <person name="Calteau A."/>
            <person name="Chiapello H."/>
            <person name="Clermont O."/>
            <person name="Cruveiller S."/>
            <person name="Danchin A."/>
            <person name="Diard M."/>
            <person name="Dossat C."/>
            <person name="Karoui M.E."/>
            <person name="Frapy E."/>
            <person name="Garry L."/>
            <person name="Ghigo J.M."/>
            <person name="Gilles A.M."/>
            <person name="Johnson J."/>
            <person name="Le Bouguenec C."/>
            <person name="Lescat M."/>
            <person name="Mangenot S."/>
            <person name="Martinez-Jehanne V."/>
            <person name="Matic I."/>
            <person name="Nassif X."/>
            <person name="Oztas S."/>
            <person name="Petit M.A."/>
            <person name="Pichon C."/>
            <person name="Rouy Z."/>
            <person name="Ruf C.S."/>
            <person name="Schneider D."/>
            <person name="Tourret J."/>
            <person name="Vacherie B."/>
            <person name="Vallenet D."/>
            <person name="Medigue C."/>
            <person name="Rocha E.P.C."/>
            <person name="Denamur E."/>
        </authorList>
    </citation>
    <scope>NUCLEOTIDE SEQUENCE [LARGE SCALE GENOMIC DNA]</scope>
    <source>
        <strain>ATCC 35469 / DSM 13698 / BCRC 15582 / CCUG 18766 / IAM 14443 / JCM 21226 / LMG 7866 / NBRC 102419 / NCTC 12128 / CDC 0568-73</strain>
    </source>
</reference>
<feature type="chain" id="PRO_1000117243" description="Peptide chain release factor 1">
    <location>
        <begin position="1"/>
        <end position="360"/>
    </location>
</feature>
<feature type="region of interest" description="Disordered" evidence="2">
    <location>
        <begin position="284"/>
        <end position="313"/>
    </location>
</feature>
<feature type="modified residue" description="N5-methylglutamine" evidence="1">
    <location>
        <position position="235"/>
    </location>
</feature>
<sequence length="360" mass="40517">MKPSIVAKLEALHERHEEVQALLGDAQTIADQERFRALSREYAQLSDVSRCFTDWQQVQEDIETAQMMLDDPEMREMAQDELREAKEKSEQLEQQLQVLLLPKDPDDERNAFLEVRAGTGGDEAALFAGDLFRMYSRYAEARRWRVEIMSASEGEHGGYKEIIAKISGDGVYGRLKFESGGHRVQRVPATESQGRIHTSACTVAVMPELPDAELPDINPADLRIDTFRSSGAGGQHVNTTDSAIRITHLPTGIVVECQDERSQHKNKAKALSVLGARIHAAEMAKRQQAEASTRRNLLGSGDRSDRNRTYNFPQGRVTDHRINLTLYRLDEVMEGKLDMLIEPIIQEHQADQLAALSEQE</sequence>
<proteinExistence type="inferred from homology"/>
<dbReference type="EMBL" id="CU928158">
    <property type="protein sequence ID" value="CAQ89265.1"/>
    <property type="molecule type" value="Genomic_DNA"/>
</dbReference>
<dbReference type="RefSeq" id="WP_000804726.1">
    <property type="nucleotide sequence ID" value="NC_011740.1"/>
</dbReference>
<dbReference type="SMR" id="B7LSH9"/>
<dbReference type="GeneID" id="93775276"/>
<dbReference type="KEGG" id="efe:EFER_1750"/>
<dbReference type="HOGENOM" id="CLU_036856_0_1_6"/>
<dbReference type="OrthoDB" id="9806673at2"/>
<dbReference type="Proteomes" id="UP000000745">
    <property type="component" value="Chromosome"/>
</dbReference>
<dbReference type="GO" id="GO:0005737">
    <property type="term" value="C:cytoplasm"/>
    <property type="evidence" value="ECO:0007669"/>
    <property type="project" value="UniProtKB-SubCell"/>
</dbReference>
<dbReference type="GO" id="GO:0016149">
    <property type="term" value="F:translation release factor activity, codon specific"/>
    <property type="evidence" value="ECO:0007669"/>
    <property type="project" value="UniProtKB-UniRule"/>
</dbReference>
<dbReference type="FunFam" id="3.30.160.20:FF:000004">
    <property type="entry name" value="Peptide chain release factor 1"/>
    <property type="match status" value="1"/>
</dbReference>
<dbReference type="FunFam" id="3.30.70.1660:FF:000002">
    <property type="entry name" value="Peptide chain release factor 1"/>
    <property type="match status" value="1"/>
</dbReference>
<dbReference type="FunFam" id="3.30.70.1660:FF:000004">
    <property type="entry name" value="Peptide chain release factor 1"/>
    <property type="match status" value="1"/>
</dbReference>
<dbReference type="Gene3D" id="3.30.160.20">
    <property type="match status" value="1"/>
</dbReference>
<dbReference type="Gene3D" id="3.30.70.1660">
    <property type="match status" value="1"/>
</dbReference>
<dbReference type="Gene3D" id="6.10.140.1950">
    <property type="match status" value="1"/>
</dbReference>
<dbReference type="HAMAP" id="MF_00093">
    <property type="entry name" value="Rel_fac_1"/>
    <property type="match status" value="1"/>
</dbReference>
<dbReference type="InterPro" id="IPR005139">
    <property type="entry name" value="PCRF"/>
</dbReference>
<dbReference type="InterPro" id="IPR000352">
    <property type="entry name" value="Pep_chain_release_fac_I"/>
</dbReference>
<dbReference type="InterPro" id="IPR045853">
    <property type="entry name" value="Pep_chain_release_fac_I_sf"/>
</dbReference>
<dbReference type="InterPro" id="IPR050057">
    <property type="entry name" value="Prokaryotic/Mito_RF"/>
</dbReference>
<dbReference type="InterPro" id="IPR004373">
    <property type="entry name" value="RF-1"/>
</dbReference>
<dbReference type="NCBIfam" id="TIGR00019">
    <property type="entry name" value="prfA"/>
    <property type="match status" value="1"/>
</dbReference>
<dbReference type="NCBIfam" id="NF001859">
    <property type="entry name" value="PRK00591.1"/>
    <property type="match status" value="1"/>
</dbReference>
<dbReference type="PANTHER" id="PTHR43804">
    <property type="entry name" value="LD18447P"/>
    <property type="match status" value="1"/>
</dbReference>
<dbReference type="PANTHER" id="PTHR43804:SF7">
    <property type="entry name" value="LD18447P"/>
    <property type="match status" value="1"/>
</dbReference>
<dbReference type="Pfam" id="PF03462">
    <property type="entry name" value="PCRF"/>
    <property type="match status" value="1"/>
</dbReference>
<dbReference type="Pfam" id="PF00472">
    <property type="entry name" value="RF-1"/>
    <property type="match status" value="1"/>
</dbReference>
<dbReference type="SMART" id="SM00937">
    <property type="entry name" value="PCRF"/>
    <property type="match status" value="1"/>
</dbReference>
<dbReference type="SUPFAM" id="SSF75620">
    <property type="entry name" value="Release factor"/>
    <property type="match status" value="1"/>
</dbReference>
<dbReference type="PROSITE" id="PS00745">
    <property type="entry name" value="RF_PROK_I"/>
    <property type="match status" value="1"/>
</dbReference>
<organism>
    <name type="scientific">Escherichia fergusonii (strain ATCC 35469 / DSM 13698 / CCUG 18766 / IAM 14443 / JCM 21226 / LMG 7866 / NBRC 102419 / NCTC 12128 / CDC 0568-73)</name>
    <dbReference type="NCBI Taxonomy" id="585054"/>
    <lineage>
        <taxon>Bacteria</taxon>
        <taxon>Pseudomonadati</taxon>
        <taxon>Pseudomonadota</taxon>
        <taxon>Gammaproteobacteria</taxon>
        <taxon>Enterobacterales</taxon>
        <taxon>Enterobacteriaceae</taxon>
        <taxon>Escherichia</taxon>
    </lineage>
</organism>